<comment type="function">
    <text evidence="1">Catalyzes the production of L-lysyl-tRNA(Lys)transfer and the transfer of a lysyl group from L-lysyl-tRNA(Lys) to membrane-bound phosphatidylglycerol (PG), which produces lysylphosphatidylglycerol (LPG), one of the components of the bacterial membrane with a positive net charge. LPG synthesis contributes to the resistance to cationic antimicrobial peptides (CAMPs) and likely protects M.tuberculosis against the CAMPs produced by competiting microorganisms (bacteriocins). In fact, the modification of anionic phosphatidylglycerol with positively charged L-lysine results in repulsion of the peptides (By similarity).</text>
</comment>
<comment type="catalytic activity">
    <reaction>
        <text>tRNA(Lys) + L-lysine + ATP = L-lysyl-tRNA(Lys) + AMP + diphosphate</text>
        <dbReference type="Rhea" id="RHEA:20792"/>
        <dbReference type="Rhea" id="RHEA-COMP:9696"/>
        <dbReference type="Rhea" id="RHEA-COMP:9697"/>
        <dbReference type="ChEBI" id="CHEBI:30616"/>
        <dbReference type="ChEBI" id="CHEBI:32551"/>
        <dbReference type="ChEBI" id="CHEBI:33019"/>
        <dbReference type="ChEBI" id="CHEBI:78442"/>
        <dbReference type="ChEBI" id="CHEBI:78529"/>
        <dbReference type="ChEBI" id="CHEBI:456215"/>
        <dbReference type="EC" id="6.1.1.6"/>
    </reaction>
</comment>
<comment type="catalytic activity">
    <reaction>
        <text>L-lysyl-tRNA(Lys) + a 1,2-diacyl-sn-glycero-3-phospho-(1'-sn-glycerol) = a 1,2-diacyl-sn-glycero-3-phospho-1'-(3'-O-L-lysyl)-sn-glycerol + tRNA(Lys)</text>
        <dbReference type="Rhea" id="RHEA:10668"/>
        <dbReference type="Rhea" id="RHEA-COMP:9696"/>
        <dbReference type="Rhea" id="RHEA-COMP:9697"/>
        <dbReference type="ChEBI" id="CHEBI:64716"/>
        <dbReference type="ChEBI" id="CHEBI:75792"/>
        <dbReference type="ChEBI" id="CHEBI:78442"/>
        <dbReference type="ChEBI" id="CHEBI:78529"/>
        <dbReference type="EC" id="2.3.2.3"/>
    </reaction>
</comment>
<comment type="cofactor">
    <cofactor evidence="1">
        <name>Mg(2+)</name>
        <dbReference type="ChEBI" id="CHEBI:18420"/>
    </cofactor>
    <text evidence="1">Binds 3 Mg(2+) ions per subunit.</text>
</comment>
<comment type="subcellular location">
    <subcellularLocation>
        <location evidence="3">Cell membrane</location>
        <topology evidence="3">Multi-pass membrane protein</topology>
    </subcellularLocation>
</comment>
<comment type="similarity">
    <text evidence="3">In the N-terminal section; belongs to the LPG synthetase family.</text>
</comment>
<comment type="similarity">
    <text evidence="3">In the C-terminal section; belongs to the class-II aminoacyl-tRNA synthetase family.</text>
</comment>
<comment type="sequence caution" evidence="3">
    <conflict type="erroneous initiation">
        <sequence resource="EMBL-CDS" id="ABL04126"/>
    </conflict>
    <text>Truncated N-terminus.</text>
</comment>
<organism>
    <name type="scientific">Mycobacterium ulcerans (strain Agy99)</name>
    <dbReference type="NCBI Taxonomy" id="362242"/>
    <lineage>
        <taxon>Bacteria</taxon>
        <taxon>Bacillati</taxon>
        <taxon>Actinomycetota</taxon>
        <taxon>Actinomycetes</taxon>
        <taxon>Mycobacteriales</taxon>
        <taxon>Mycobacteriaceae</taxon>
        <taxon>Mycobacterium</taxon>
        <taxon>Mycobacterium ulcerans group</taxon>
    </lineage>
</organism>
<reference key="1">
    <citation type="journal article" date="2007" name="Genome Res.">
        <title>Reductive evolution and niche adaptation inferred from the genome of Mycobacterium ulcerans, the causative agent of Buruli ulcer.</title>
        <authorList>
            <person name="Stinear T.P."/>
            <person name="Seemann T."/>
            <person name="Pidot S."/>
            <person name="Frigui W."/>
            <person name="Reysset G."/>
            <person name="Garnier T."/>
            <person name="Meurice G."/>
            <person name="Simon D."/>
            <person name="Bouchier C."/>
            <person name="Ma L."/>
            <person name="Tichit M."/>
            <person name="Porter J.L."/>
            <person name="Ryan J."/>
            <person name="Johnson P.D.R."/>
            <person name="Davies J.K."/>
            <person name="Jenkin G.A."/>
            <person name="Small P.L.C."/>
            <person name="Jones L.M."/>
            <person name="Tekaia F."/>
            <person name="Laval F."/>
            <person name="Daffe M."/>
            <person name="Parkhill J."/>
            <person name="Cole S.T."/>
        </authorList>
    </citation>
    <scope>NUCLEOTIDE SEQUENCE [LARGE SCALE GENOMIC DNA]</scope>
    <source>
        <strain>Agy99</strain>
    </source>
</reference>
<evidence type="ECO:0000250" key="1"/>
<evidence type="ECO:0000255" key="2"/>
<evidence type="ECO:0000305" key="3"/>
<sequence>MTVTKPRSVQSRHISRYDWVPAAAGWAVGVIATLSLLASISPLVRWIIKVPREFINSYLFNFPDTSFAWSFVLALLAAALAARKRIAWLLLLTNVVLAAFLNAADIAAGGNTAAQNFGENLGFEVHVVAIVVLVLGYRQFWTKVRRGALFKAAAVLVAGGAIGILVSWGLVDLFPGSLAPHDRLPYVANRVIGFALADPDLFTGRPHVFLNAMFGLFGALALIAATIVLFQSQRADNALTGEDESAIRGLLELYGNSDSLGYFATRRDKSVIFASSGRAAITYRVEIGVCLASGDPVGDPRSWQQAIDAWLRLCQTYGWSPGVMGASSQGAKAYREAGLNALELGDEAILVPADFTLSGPDMRGVRQAVTRARRAGLTVRIRRHRDISGAEMEQTIDRADGWRDTESERGFSMALGRLGDPADTDCLLVEALDPDDLVVAMLSLVPWGTSGVSLDLMRRSPQSPNGTIELMVSELALRAEGLGISRISLNFAMFRSAFEQGAQLGAGPVARLWRWLLVFFSRWWQIETLYRSNQKYQPQWVPRYACYEDARVIPKVGVASVIAEGFLVLPFSRRNKVHTGHHPAVPERLAATGLLHHDGSAPDVSGLRQSAIADGDDPQRRLPEQVRVRLNKLKKLRSSGIDAYPVGEPPTHTVAQAMDADDQASVSVSGRILRVRNYGGVLFAHLRDWSGEIQVLLDNSRLGQGRAADFNAAIDLGDLVEMTGQMGSSKTGTRSLIVRRWRLIGKCLRPLPNKWNGLTDPEARVRTRYVDLAVNAESRTLITARSAVLRSVRETLSAKGFIEVETPILQQVHGGATARPFITHINTYSMDLFLRIAPELYLKRLCVGGVERVFELGRAFRNEGVDFSHNPEFTLLEAYQAHADYRVWIDSCRELIQNAAQAANGAPVAMRPAGGGRLEPVGISGVWAVKTVHDAVSEALGEQIDADTDLATLRRLADAARIPYRAQWDAGAVVLELYEHLVESRTEQPTFYLDFPTSVSPLTRPHRSKPGIAERWDLVAWGVELGTAYSELTDPVEQRLRLEEQSLLAAGGDPEAMQLDEDFLQAMEYAMPPTGGLGMGVDRVVMLITGRSIRETLPFPLAKPH</sequence>
<accession>A0PP57</accession>
<dbReference type="EC" id="6.1.1.6"/>
<dbReference type="EC" id="2.3.2.3"/>
<dbReference type="EMBL" id="CP000325">
    <property type="protein sequence ID" value="ABL04126.1"/>
    <property type="status" value="ALT_INIT"/>
    <property type="molecule type" value="Genomic_DNA"/>
</dbReference>
<dbReference type="RefSeq" id="WP_071497800.1">
    <property type="nucleotide sequence ID" value="NC_008611.1"/>
</dbReference>
<dbReference type="SMR" id="A0PP57"/>
<dbReference type="KEGG" id="mul:MUL_1626"/>
<dbReference type="eggNOG" id="COG1190">
    <property type="taxonomic scope" value="Bacteria"/>
</dbReference>
<dbReference type="eggNOG" id="COG2898">
    <property type="taxonomic scope" value="Bacteria"/>
</dbReference>
<dbReference type="HOGENOM" id="CLU_008255_2_0_11"/>
<dbReference type="Proteomes" id="UP000000765">
    <property type="component" value="Chromosome"/>
</dbReference>
<dbReference type="GO" id="GO:0005829">
    <property type="term" value="C:cytosol"/>
    <property type="evidence" value="ECO:0007669"/>
    <property type="project" value="TreeGrafter"/>
</dbReference>
<dbReference type="GO" id="GO:0005886">
    <property type="term" value="C:plasma membrane"/>
    <property type="evidence" value="ECO:0007669"/>
    <property type="project" value="UniProtKB-SubCell"/>
</dbReference>
<dbReference type="GO" id="GO:0005524">
    <property type="term" value="F:ATP binding"/>
    <property type="evidence" value="ECO:0007669"/>
    <property type="project" value="UniProtKB-UniRule"/>
</dbReference>
<dbReference type="GO" id="GO:0004824">
    <property type="term" value="F:lysine-tRNA ligase activity"/>
    <property type="evidence" value="ECO:0007669"/>
    <property type="project" value="UniProtKB-UniRule"/>
</dbReference>
<dbReference type="GO" id="GO:0000287">
    <property type="term" value="F:magnesium ion binding"/>
    <property type="evidence" value="ECO:0007669"/>
    <property type="project" value="UniProtKB-UniRule"/>
</dbReference>
<dbReference type="GO" id="GO:0050071">
    <property type="term" value="F:phosphatidylglycerol lysyltransferase activity"/>
    <property type="evidence" value="ECO:0007669"/>
    <property type="project" value="UniProtKB-EC"/>
</dbReference>
<dbReference type="GO" id="GO:0000049">
    <property type="term" value="F:tRNA binding"/>
    <property type="evidence" value="ECO:0007669"/>
    <property type="project" value="TreeGrafter"/>
</dbReference>
<dbReference type="GO" id="GO:0006629">
    <property type="term" value="P:lipid metabolic process"/>
    <property type="evidence" value="ECO:0007669"/>
    <property type="project" value="UniProtKB-KW"/>
</dbReference>
<dbReference type="GO" id="GO:0006430">
    <property type="term" value="P:lysyl-tRNA aminoacylation"/>
    <property type="evidence" value="ECO:0007669"/>
    <property type="project" value="UniProtKB-UniRule"/>
</dbReference>
<dbReference type="GO" id="GO:0046677">
    <property type="term" value="P:response to antibiotic"/>
    <property type="evidence" value="ECO:0007669"/>
    <property type="project" value="UniProtKB-KW"/>
</dbReference>
<dbReference type="CDD" id="cd04322">
    <property type="entry name" value="LysRS_N"/>
    <property type="match status" value="1"/>
</dbReference>
<dbReference type="Gene3D" id="3.30.930.10">
    <property type="entry name" value="Bira Bifunctional Protein, Domain 2"/>
    <property type="match status" value="1"/>
</dbReference>
<dbReference type="Gene3D" id="2.40.50.140">
    <property type="entry name" value="Nucleic acid-binding proteins"/>
    <property type="match status" value="1"/>
</dbReference>
<dbReference type="HAMAP" id="MF_00252">
    <property type="entry name" value="Lys_tRNA_synth_class2"/>
    <property type="match status" value="1"/>
</dbReference>
<dbReference type="InterPro" id="IPR004364">
    <property type="entry name" value="Aa-tRNA-synt_II"/>
</dbReference>
<dbReference type="InterPro" id="IPR006195">
    <property type="entry name" value="aa-tRNA-synth_II"/>
</dbReference>
<dbReference type="InterPro" id="IPR045864">
    <property type="entry name" value="aa-tRNA-synth_II/BPL/LPL"/>
</dbReference>
<dbReference type="InterPro" id="IPR024320">
    <property type="entry name" value="LPG_synthase_C"/>
</dbReference>
<dbReference type="InterPro" id="IPR002313">
    <property type="entry name" value="Lys-tRNA-ligase_II"/>
</dbReference>
<dbReference type="InterPro" id="IPR044136">
    <property type="entry name" value="Lys-tRNA-ligase_II_N"/>
</dbReference>
<dbReference type="InterPro" id="IPR018149">
    <property type="entry name" value="Lys-tRNA-synth_II_C"/>
</dbReference>
<dbReference type="InterPro" id="IPR012340">
    <property type="entry name" value="NA-bd_OB-fold"/>
</dbReference>
<dbReference type="InterPro" id="IPR004365">
    <property type="entry name" value="NA-bd_OB_tRNA"/>
</dbReference>
<dbReference type="InterPro" id="IPR031553">
    <property type="entry name" value="tRNA-synt_2_TM"/>
</dbReference>
<dbReference type="NCBIfam" id="TIGR00499">
    <property type="entry name" value="lysS_bact"/>
    <property type="match status" value="1"/>
</dbReference>
<dbReference type="NCBIfam" id="NF001756">
    <property type="entry name" value="PRK00484.1"/>
    <property type="match status" value="1"/>
</dbReference>
<dbReference type="NCBIfam" id="NF002821">
    <property type="entry name" value="PRK02983.1"/>
    <property type="match status" value="1"/>
</dbReference>
<dbReference type="PANTHER" id="PTHR42918:SF15">
    <property type="entry name" value="LYSINE--TRNA LIGASE, CHLOROPLASTIC_MITOCHONDRIAL"/>
    <property type="match status" value="1"/>
</dbReference>
<dbReference type="PANTHER" id="PTHR42918">
    <property type="entry name" value="LYSYL-TRNA SYNTHETASE"/>
    <property type="match status" value="1"/>
</dbReference>
<dbReference type="Pfam" id="PF09924">
    <property type="entry name" value="LPG_synthase_C"/>
    <property type="match status" value="1"/>
</dbReference>
<dbReference type="Pfam" id="PF00152">
    <property type="entry name" value="tRNA-synt_2"/>
    <property type="match status" value="1"/>
</dbReference>
<dbReference type="Pfam" id="PF16995">
    <property type="entry name" value="tRNA-synt_2_TM"/>
    <property type="match status" value="1"/>
</dbReference>
<dbReference type="Pfam" id="PF01336">
    <property type="entry name" value="tRNA_anti-codon"/>
    <property type="match status" value="1"/>
</dbReference>
<dbReference type="PRINTS" id="PR00982">
    <property type="entry name" value="TRNASYNTHLYS"/>
</dbReference>
<dbReference type="SUPFAM" id="SSF55681">
    <property type="entry name" value="Class II aaRS and biotin synthetases"/>
    <property type="match status" value="1"/>
</dbReference>
<dbReference type="SUPFAM" id="SSF50249">
    <property type="entry name" value="Nucleic acid-binding proteins"/>
    <property type="match status" value="1"/>
</dbReference>
<dbReference type="PROSITE" id="PS50862">
    <property type="entry name" value="AA_TRNA_LIGASE_II"/>
    <property type="match status" value="1"/>
</dbReference>
<proteinExistence type="inferred from homology"/>
<name>LYSX_MYCUA</name>
<keyword id="KW-0030">Aminoacyl-tRNA synthetase</keyword>
<keyword id="KW-0046">Antibiotic resistance</keyword>
<keyword id="KW-0067">ATP-binding</keyword>
<keyword id="KW-1003">Cell membrane</keyword>
<keyword id="KW-0436">Ligase</keyword>
<keyword id="KW-0443">Lipid metabolism</keyword>
<keyword id="KW-0460">Magnesium</keyword>
<keyword id="KW-0472">Membrane</keyword>
<keyword id="KW-0479">Metal-binding</keyword>
<keyword id="KW-0511">Multifunctional enzyme</keyword>
<keyword id="KW-0547">Nucleotide-binding</keyword>
<keyword id="KW-0808">Transferase</keyword>
<keyword id="KW-0812">Transmembrane</keyword>
<keyword id="KW-1133">Transmembrane helix</keyword>
<keyword id="KW-0843">Virulence</keyword>
<protein>
    <recommendedName>
        <fullName>Lysylphosphatidylglycerol biosynthesis bifunctional protein LysX</fullName>
    </recommendedName>
    <domain>
        <recommendedName>
            <fullName>Lysine--tRNA ligase</fullName>
            <ecNumber>6.1.1.6</ecNumber>
        </recommendedName>
        <alternativeName>
            <fullName>Lysyl-tRNA synthetase</fullName>
            <shortName>LysRS</shortName>
        </alternativeName>
    </domain>
    <domain>
        <recommendedName>
            <fullName>Phosphatidylglycerol lysyltransferase</fullName>
            <ecNumber>2.3.2.3</ecNumber>
        </recommendedName>
        <alternativeName>
            <fullName>Lysylphosphatidylglycerol synthetase</fullName>
            <shortName>LPG synthetase</shortName>
        </alternativeName>
    </domain>
</protein>
<gene>
    <name type="primary">lysX</name>
    <name type="ordered locus">MUL_1626</name>
</gene>
<feature type="chain" id="PRO_0000394331" description="Lysylphosphatidylglycerol biosynthesis bifunctional protein LysX">
    <location>
        <begin position="1"/>
        <end position="1105"/>
    </location>
</feature>
<feature type="transmembrane region" description="Helical" evidence="2">
    <location>
        <begin position="20"/>
        <end position="40"/>
    </location>
</feature>
<feature type="transmembrane region" description="Helical" evidence="2">
    <location>
        <begin position="62"/>
        <end position="82"/>
    </location>
</feature>
<feature type="transmembrane region" description="Helical" evidence="2">
    <location>
        <begin position="86"/>
        <end position="106"/>
    </location>
</feature>
<feature type="transmembrane region" description="Helical" evidence="2">
    <location>
        <begin position="117"/>
        <end position="137"/>
    </location>
</feature>
<feature type="transmembrane region" description="Helical" evidence="2">
    <location>
        <begin position="154"/>
        <end position="174"/>
    </location>
</feature>
<feature type="transmembrane region" description="Helical" evidence="2">
    <location>
        <begin position="186"/>
        <end position="203"/>
    </location>
</feature>
<feature type="transmembrane region" description="Helical" evidence="2">
    <location>
        <begin position="208"/>
        <end position="228"/>
    </location>
</feature>
<feature type="region of interest" description="Phosphatidylglycerol lysyltransferase">
    <location>
        <begin position="1"/>
        <end position="603"/>
    </location>
</feature>
<feature type="region of interest" description="Lysine--tRNA ligase">
    <location>
        <begin position="604"/>
        <end position="1105"/>
    </location>
</feature>
<feature type="binding site" evidence="1">
    <location>
        <position position="1017"/>
    </location>
    <ligand>
        <name>Mg(2+)</name>
        <dbReference type="ChEBI" id="CHEBI:18420"/>
        <label>1</label>
    </ligand>
</feature>
<feature type="binding site" evidence="1">
    <location>
        <position position="1024"/>
    </location>
    <ligand>
        <name>Mg(2+)</name>
        <dbReference type="ChEBI" id="CHEBI:18420"/>
        <label>1</label>
    </ligand>
</feature>
<feature type="binding site" evidence="1">
    <location>
        <position position="1024"/>
    </location>
    <ligand>
        <name>Mg(2+)</name>
        <dbReference type="ChEBI" id="CHEBI:18420"/>
        <label>2</label>
    </ligand>
</feature>